<sequence>MTDKYSSNLVPVNIEDEMKASYLDYAMSVIVSRAIPDVRDGLKPVHRRIIYSMYEAGNHASKPYRKSARIVGDVMGKYHPHGDSAIYDSLVRMTQDFSLRLPLVDGQGNFGSMDGDAAAAMRYTESRMSKVAHKLVEDIDKGTVSFNINYDGSEEEPSVLPAMFPNLLVNGSGGIAVGMATNIPPHNLGEIIDACCLYIDNNDIEILDLLEVVKGPDFPTGSMILGISGIRSAYLTGRGSIIMRGKAEIENIGNSRQAIIITEIPYMVNKARLVEKIAEMVKEKRIEGISDLRDESNKNGVRIFIELKKDVVAEVVLNQIYACTQLQTNFGVIMLALKDGLPKVMNLKEVIAAFVSFREVVITNRTIYLLNKARDRAHILLGLAIAISNIDEIIYIIKASNDTNLAKQELMDRQWEVLDILPLIKLVDDKVMLNERGKLSFTEVQAKAILEMKLQRLTAMEKNKLEQDLKHLATEIAEYLNILDSRTRLLEILKEELIKVKEEFAVPRLTAIEFGEFDQDIEDLIQREEMVVTVTLGGYIKRVPLSSYRSQKRGGKGRSGLSMRDEDITMQVFVGSTHTPMLFFSNIGKVYSLKLYKLPLSNPQGKGRPMVNILPLQENEHITNIMPLPENQDEWDHLNIMFATAKGNIRRSDLLDFKKIQLNGKIAIRLDEDDKLIDVKPCKEDEHILLATKAGKALRFPVESLRIIKSRISDGVRGMKLAKEDSVISMTVLKGINSTKEDRDAYLTVPWEKRLKIAKGEEFNLEALGVHLNADSILEMANSEEFILTVTENGFGKRSSAYGYRITDRGGSGIINMDINDKTGLVVGVMPVKMDDELMLITNSGKLIRCKLESVRITGRNTSGVILFKLDDDEKVVSVSLIAETSESGEDSELVEDGLESAENM</sequence>
<reference key="1">
    <citation type="journal article" date="2004" name="J. Bacteriol.">
        <title>Complete genome sequence of Rickettsia typhi and comparison with sequences of other Rickettsiae.</title>
        <authorList>
            <person name="McLeod M.P."/>
            <person name="Qin X."/>
            <person name="Karpathy S.E."/>
            <person name="Gioia J."/>
            <person name="Highlander S.K."/>
            <person name="Fox G.E."/>
            <person name="McNeill T.Z."/>
            <person name="Jiang H."/>
            <person name="Muzny D."/>
            <person name="Jacob L.S."/>
            <person name="Hawes A.C."/>
            <person name="Sodergren E."/>
            <person name="Gill R."/>
            <person name="Hume J."/>
            <person name="Morgan M."/>
            <person name="Fan G."/>
            <person name="Amin A.G."/>
            <person name="Gibbs R.A."/>
            <person name="Hong C."/>
            <person name="Yu X.-J."/>
            <person name="Walker D.H."/>
            <person name="Weinstock G.M."/>
        </authorList>
    </citation>
    <scope>NUCLEOTIDE SEQUENCE [LARGE SCALE GENOMIC DNA]</scope>
    <source>
        <strain>ATCC VR-144 / Wilmington</strain>
    </source>
</reference>
<protein>
    <recommendedName>
        <fullName evidence="1">DNA gyrase subunit A</fullName>
        <ecNumber evidence="1">5.6.2.2</ecNumber>
    </recommendedName>
</protein>
<comment type="function">
    <text evidence="1">A type II topoisomerase that negatively supercoils closed circular double-stranded (ds) DNA in an ATP-dependent manner to modulate DNA topology and maintain chromosomes in an underwound state. Negative supercoiling favors strand separation, and DNA replication, transcription, recombination and repair, all of which involve strand separation. Also able to catalyze the interconversion of other topological isomers of dsDNA rings, including catenanes and knotted rings. Type II topoisomerases break and join 2 DNA strands simultaneously in an ATP-dependent manner.</text>
</comment>
<comment type="catalytic activity">
    <reaction evidence="1">
        <text>ATP-dependent breakage, passage and rejoining of double-stranded DNA.</text>
        <dbReference type="EC" id="5.6.2.2"/>
    </reaction>
</comment>
<comment type="subunit">
    <text evidence="1">Heterotetramer, composed of two GyrA and two GyrB chains. In the heterotetramer, GyrA contains the active site tyrosine that forms a transient covalent intermediate with DNA, while GyrB binds cofactors and catalyzes ATP hydrolysis.</text>
</comment>
<comment type="subcellular location">
    <subcellularLocation>
        <location evidence="1">Cytoplasm</location>
    </subcellularLocation>
</comment>
<comment type="miscellaneous">
    <text evidence="1">Few gyrases are as efficient as E.coli at forming negative supercoils. Not all organisms have 2 type II topoisomerases; in organisms with a single type II topoisomerase this enzyme also has to decatenate newly replicated chromosomes.</text>
</comment>
<comment type="similarity">
    <text evidence="1">Belongs to the type II topoisomerase GyrA/ParC subunit family.</text>
</comment>
<proteinExistence type="inferred from homology"/>
<evidence type="ECO:0000255" key="1">
    <source>
        <dbReference type="HAMAP-Rule" id="MF_01897"/>
    </source>
</evidence>
<evidence type="ECO:0000255" key="2">
    <source>
        <dbReference type="PROSITE-ProRule" id="PRU01384"/>
    </source>
</evidence>
<dbReference type="EC" id="5.6.2.2" evidence="1"/>
<dbReference type="EMBL" id="AE017197">
    <property type="protein sequence ID" value="AAU03680.1"/>
    <property type="molecule type" value="Genomic_DNA"/>
</dbReference>
<dbReference type="RefSeq" id="WP_011190667.1">
    <property type="nucleotide sequence ID" value="NC_006142.1"/>
</dbReference>
<dbReference type="SMR" id="Q68XG2"/>
<dbReference type="KEGG" id="rty:RT0196"/>
<dbReference type="eggNOG" id="COG0188">
    <property type="taxonomic scope" value="Bacteria"/>
</dbReference>
<dbReference type="HOGENOM" id="CLU_002977_6_1_5"/>
<dbReference type="OrthoDB" id="9806486at2"/>
<dbReference type="Proteomes" id="UP000000604">
    <property type="component" value="Chromosome"/>
</dbReference>
<dbReference type="GO" id="GO:0005694">
    <property type="term" value="C:chromosome"/>
    <property type="evidence" value="ECO:0007669"/>
    <property type="project" value="InterPro"/>
</dbReference>
<dbReference type="GO" id="GO:0005737">
    <property type="term" value="C:cytoplasm"/>
    <property type="evidence" value="ECO:0007669"/>
    <property type="project" value="UniProtKB-SubCell"/>
</dbReference>
<dbReference type="GO" id="GO:0009330">
    <property type="term" value="C:DNA topoisomerase type II (double strand cut, ATP-hydrolyzing) complex"/>
    <property type="evidence" value="ECO:0007669"/>
    <property type="project" value="TreeGrafter"/>
</dbReference>
<dbReference type="GO" id="GO:0005524">
    <property type="term" value="F:ATP binding"/>
    <property type="evidence" value="ECO:0007669"/>
    <property type="project" value="UniProtKB-UniRule"/>
</dbReference>
<dbReference type="GO" id="GO:0003677">
    <property type="term" value="F:DNA binding"/>
    <property type="evidence" value="ECO:0007669"/>
    <property type="project" value="UniProtKB-UniRule"/>
</dbReference>
<dbReference type="GO" id="GO:0034335">
    <property type="term" value="F:DNA negative supercoiling activity"/>
    <property type="evidence" value="ECO:0007669"/>
    <property type="project" value="UniProtKB-ARBA"/>
</dbReference>
<dbReference type="GO" id="GO:0006265">
    <property type="term" value="P:DNA topological change"/>
    <property type="evidence" value="ECO:0007669"/>
    <property type="project" value="UniProtKB-UniRule"/>
</dbReference>
<dbReference type="GO" id="GO:0006261">
    <property type="term" value="P:DNA-templated DNA replication"/>
    <property type="evidence" value="ECO:0007669"/>
    <property type="project" value="UniProtKB-UniRule"/>
</dbReference>
<dbReference type="CDD" id="cd00187">
    <property type="entry name" value="TOP4c"/>
    <property type="match status" value="1"/>
</dbReference>
<dbReference type="FunFam" id="1.10.268.10:FF:000001">
    <property type="entry name" value="DNA gyrase subunit A"/>
    <property type="match status" value="1"/>
</dbReference>
<dbReference type="FunFam" id="3.30.1360.40:FF:000002">
    <property type="entry name" value="DNA gyrase subunit A"/>
    <property type="match status" value="1"/>
</dbReference>
<dbReference type="FunFam" id="3.90.199.10:FF:000001">
    <property type="entry name" value="DNA gyrase subunit A"/>
    <property type="match status" value="1"/>
</dbReference>
<dbReference type="Gene3D" id="3.30.1360.40">
    <property type="match status" value="1"/>
</dbReference>
<dbReference type="Gene3D" id="2.120.10.90">
    <property type="entry name" value="DNA gyrase/topoisomerase IV, subunit A, C-terminal"/>
    <property type="match status" value="1"/>
</dbReference>
<dbReference type="Gene3D" id="3.90.199.10">
    <property type="entry name" value="Topoisomerase II, domain 5"/>
    <property type="match status" value="1"/>
</dbReference>
<dbReference type="Gene3D" id="1.10.268.10">
    <property type="entry name" value="Topoisomerase, domain 3"/>
    <property type="match status" value="1"/>
</dbReference>
<dbReference type="HAMAP" id="MF_01897">
    <property type="entry name" value="GyrA"/>
    <property type="match status" value="1"/>
</dbReference>
<dbReference type="InterPro" id="IPR005743">
    <property type="entry name" value="GyrA"/>
</dbReference>
<dbReference type="InterPro" id="IPR006691">
    <property type="entry name" value="GyrA/parC_rep"/>
</dbReference>
<dbReference type="InterPro" id="IPR035516">
    <property type="entry name" value="Gyrase/topoIV_suA_C"/>
</dbReference>
<dbReference type="InterPro" id="IPR013760">
    <property type="entry name" value="Topo_IIA-like_dom_sf"/>
</dbReference>
<dbReference type="InterPro" id="IPR013758">
    <property type="entry name" value="Topo_IIA_A/C_ab"/>
</dbReference>
<dbReference type="InterPro" id="IPR013757">
    <property type="entry name" value="Topo_IIA_A_a_sf"/>
</dbReference>
<dbReference type="InterPro" id="IPR002205">
    <property type="entry name" value="Topo_IIA_dom_A"/>
</dbReference>
<dbReference type="InterPro" id="IPR050220">
    <property type="entry name" value="Type_II_DNA_Topoisomerases"/>
</dbReference>
<dbReference type="NCBIfam" id="TIGR01063">
    <property type="entry name" value="gyrA"/>
    <property type="match status" value="1"/>
</dbReference>
<dbReference type="NCBIfam" id="NF004043">
    <property type="entry name" value="PRK05560.1"/>
    <property type="match status" value="1"/>
</dbReference>
<dbReference type="NCBIfam" id="NF004044">
    <property type="entry name" value="PRK05561.1"/>
    <property type="match status" value="1"/>
</dbReference>
<dbReference type="PANTHER" id="PTHR43493:SF5">
    <property type="entry name" value="DNA GYRASE SUBUNIT A, CHLOROPLASTIC_MITOCHONDRIAL"/>
    <property type="match status" value="1"/>
</dbReference>
<dbReference type="PANTHER" id="PTHR43493">
    <property type="entry name" value="DNA GYRASE/TOPOISOMERASE SUBUNIT A"/>
    <property type="match status" value="1"/>
</dbReference>
<dbReference type="Pfam" id="PF03989">
    <property type="entry name" value="DNA_gyraseA_C"/>
    <property type="match status" value="6"/>
</dbReference>
<dbReference type="Pfam" id="PF00521">
    <property type="entry name" value="DNA_topoisoIV"/>
    <property type="match status" value="1"/>
</dbReference>
<dbReference type="SMART" id="SM00434">
    <property type="entry name" value="TOP4c"/>
    <property type="match status" value="1"/>
</dbReference>
<dbReference type="SUPFAM" id="SSF101904">
    <property type="entry name" value="GyrA/ParC C-terminal domain-like"/>
    <property type="match status" value="1"/>
</dbReference>
<dbReference type="SUPFAM" id="SSF56719">
    <property type="entry name" value="Type II DNA topoisomerase"/>
    <property type="match status" value="1"/>
</dbReference>
<dbReference type="PROSITE" id="PS52040">
    <property type="entry name" value="TOPO_IIA"/>
    <property type="match status" value="1"/>
</dbReference>
<organism>
    <name type="scientific">Rickettsia typhi (strain ATCC VR-144 / Wilmington)</name>
    <dbReference type="NCBI Taxonomy" id="257363"/>
    <lineage>
        <taxon>Bacteria</taxon>
        <taxon>Pseudomonadati</taxon>
        <taxon>Pseudomonadota</taxon>
        <taxon>Alphaproteobacteria</taxon>
        <taxon>Rickettsiales</taxon>
        <taxon>Rickettsiaceae</taxon>
        <taxon>Rickettsieae</taxon>
        <taxon>Rickettsia</taxon>
        <taxon>typhus group</taxon>
    </lineage>
</organism>
<keyword id="KW-0067">ATP-binding</keyword>
<keyword id="KW-0963">Cytoplasm</keyword>
<keyword id="KW-0238">DNA-binding</keyword>
<keyword id="KW-0413">Isomerase</keyword>
<keyword id="KW-0547">Nucleotide-binding</keyword>
<keyword id="KW-0799">Topoisomerase</keyword>
<accession>Q68XG2</accession>
<gene>
    <name evidence="1" type="primary">gyrA</name>
    <name type="ordered locus">RT0196</name>
</gene>
<feature type="chain" id="PRO_0000273109" description="DNA gyrase subunit A">
    <location>
        <begin position="1"/>
        <end position="905"/>
    </location>
</feature>
<feature type="domain" description="Topo IIA-type catalytic" evidence="2">
    <location>
        <begin position="35"/>
        <end position="524"/>
    </location>
</feature>
<feature type="short sequence motif" description="GyrA-box" evidence="1">
    <location>
        <begin position="551"/>
        <end position="557"/>
    </location>
</feature>
<feature type="active site" description="O-(5'-phospho-DNA)-tyrosine intermediate" evidence="1">
    <location>
        <position position="123"/>
    </location>
</feature>
<name>GYRA_RICTY</name>